<name>MCRC_METVO</name>
<keyword id="KW-0484">Methanogenesis</keyword>
<proteinExistence type="predicted"/>
<accession>P11567</accession>
<feature type="chain" id="PRO_0000147490" description="Methyl-coenzyme M reductase operon protein C">
    <location>
        <begin position="1"/>
        <end position="182"/>
    </location>
</feature>
<reference key="1">
    <citation type="journal article" date="1988" name="Mol. Gen. Genet.">
        <title>Comparative analysis of genes encoding methyl coenzyme M reductase in methanogenic bacteria.</title>
        <authorList>
            <person name="Klein A."/>
            <person name="Allmansberger R."/>
            <person name="Bokranz M."/>
            <person name="Knaub S."/>
            <person name="Mueller B."/>
            <person name="Muth E."/>
        </authorList>
    </citation>
    <scope>NUCLEOTIDE SEQUENCE [GENOMIC DNA]</scope>
    <source>
        <strain>ATCC 33273 / DSM 1537 / NBRC 100457 / OCM 70 / PS</strain>
    </source>
</reference>
<organism>
    <name type="scientific">Methanococcus voltae</name>
    <dbReference type="NCBI Taxonomy" id="2188"/>
    <lineage>
        <taxon>Archaea</taxon>
        <taxon>Methanobacteriati</taxon>
        <taxon>Methanobacteriota</taxon>
        <taxon>Methanomada group</taxon>
        <taxon>Methanococci</taxon>
        <taxon>Methanococcales</taxon>
        <taxon>Methanococcaceae</taxon>
        <taxon>Methanococcus</taxon>
    </lineage>
</organism>
<protein>
    <recommendedName>
        <fullName>Methyl-coenzyme M reductase operon protein C</fullName>
    </recommendedName>
</protein>
<gene>
    <name type="primary">mcrC</name>
</gene>
<dbReference type="EMBL" id="X07793">
    <property type="protein sequence ID" value="CAA30631.1"/>
    <property type="molecule type" value="Genomic_DNA"/>
</dbReference>
<dbReference type="PIR" id="S03259">
    <property type="entry name" value="S03259"/>
</dbReference>
<dbReference type="SMR" id="P11567"/>
<dbReference type="GO" id="GO:0015948">
    <property type="term" value="P:methanogenesis"/>
    <property type="evidence" value="ECO:0007669"/>
    <property type="project" value="UniProtKB-KW"/>
</dbReference>
<dbReference type="InterPro" id="IPR007687">
    <property type="entry name" value="Me_CoM_Rdtase_prot-C"/>
</dbReference>
<dbReference type="InterPro" id="IPR026327">
    <property type="entry name" value="Me_CoM_Rdtase_prot-C-like"/>
</dbReference>
<dbReference type="NCBIfam" id="TIGR03264">
    <property type="entry name" value="met_CoM_red_C"/>
    <property type="match status" value="1"/>
</dbReference>
<dbReference type="Pfam" id="PF04609">
    <property type="entry name" value="MCR_C"/>
    <property type="match status" value="1"/>
</dbReference>
<dbReference type="PIRSF" id="PIRSF003137">
    <property type="entry name" value="McrC"/>
    <property type="match status" value="1"/>
</dbReference>
<comment type="subunit">
    <text>MCR is composed of three subunits: alpha, beta, and gamma. The function of proteins C and D is not known.</text>
</comment>
<sequence length="182" mass="19650">MGLGQGGGLAQRGTFAEGLKNDVVVVALSPGRRHLTKPVCEITYGIRESGIQTSVQVLNAGSGLPADAPNSLGSTFGLKPEEVEQVNRHKLCIIHFGNVKSHVVYKARLFLRFVTILTIVVCQTPIDMEDFAKIGIKTADVIPIEPKTKGTIVEIVTGVVRGESSPQSKIDEIIEKIKKHLK</sequence>